<accession>Q03919</accession>
<accession>D6VSC2</accession>
<keyword id="KW-1017">Isopeptide bond</keyword>
<keyword id="KW-1185">Reference proteome</keyword>
<keyword id="KW-0833">Ubl conjugation pathway</keyword>
<feature type="chain" id="PRO_0000035979" description="NEDD8-like protein RUB1">
    <location>
        <begin position="1"/>
        <end position="76"/>
    </location>
</feature>
<feature type="propeptide" id="PRO_0000035980" evidence="7">
    <location>
        <position position="77"/>
    </location>
</feature>
<feature type="domain" description="Ubiquitin-like" evidence="1">
    <location>
        <begin position="1"/>
        <end position="74"/>
    </location>
</feature>
<feature type="cross-link" description="Glycyl lysine isopeptide (Gly-Lys) (interchain with K-? in acceptor proteins)" evidence="1">
    <location>
        <position position="76"/>
    </location>
</feature>
<organism>
    <name type="scientific">Saccharomyces cerevisiae (strain ATCC 204508 / S288c)</name>
    <name type="common">Baker's yeast</name>
    <dbReference type="NCBI Taxonomy" id="559292"/>
    <lineage>
        <taxon>Eukaryota</taxon>
        <taxon>Fungi</taxon>
        <taxon>Dikarya</taxon>
        <taxon>Ascomycota</taxon>
        <taxon>Saccharomycotina</taxon>
        <taxon>Saccharomycetes</taxon>
        <taxon>Saccharomycetales</taxon>
        <taxon>Saccharomycetaceae</taxon>
        <taxon>Saccharomyces</taxon>
    </lineage>
</organism>
<name>RUB1_YEAST</name>
<comment type="function">
    <text evidence="2 5 6">Ubiquitin-like protein modifier that can be covalently attached to lysine residues of target proteins. Activated by the dimeric UBA3-ULA1 E1 enzyme and conjugated by the E2 UBC12 to substrate proteins. RUB1-conjugated (neddylated) substrate proteins include the cullins CDC53, RTT101 and CUL3, and the modification enhances the ubiquitin-ligase activity of the corresponding cullin-RING-based E3 ubiquitin-protein ligase complexes (CRLs).</text>
</comment>
<comment type="subunit">
    <text evidence="4 6">Interacts with CDC53 and DCN1.</text>
</comment>
<comment type="miscellaneous">
    <text evidence="3">Present with 1310 molecules/cell in log phase SD medium.</text>
</comment>
<gene>
    <name type="primary">RUB1</name>
    <name type="ordered locus">YDR139C</name>
    <name type="ORF">YD9302.15C</name>
</gene>
<dbReference type="EMBL" id="Y16890">
    <property type="protein sequence ID" value="CAA76516.1"/>
    <property type="molecule type" value="Genomic_DNA"/>
</dbReference>
<dbReference type="EMBL" id="Z48179">
    <property type="protein sequence ID" value="CAA88221.1"/>
    <property type="molecule type" value="Genomic_DNA"/>
</dbReference>
<dbReference type="EMBL" id="BK006938">
    <property type="protein sequence ID" value="DAA11982.1"/>
    <property type="molecule type" value="Genomic_DNA"/>
</dbReference>
<dbReference type="PIR" id="S51867">
    <property type="entry name" value="S51867"/>
</dbReference>
<dbReference type="RefSeq" id="NP_010423.4">
    <property type="nucleotide sequence ID" value="NM_001180446.3"/>
</dbReference>
<dbReference type="SMR" id="Q03919"/>
<dbReference type="BioGRID" id="32193">
    <property type="interactions" value="84"/>
</dbReference>
<dbReference type="DIP" id="DIP-1627N"/>
<dbReference type="FunCoup" id="Q03919">
    <property type="interactions" value="265"/>
</dbReference>
<dbReference type="IntAct" id="Q03919">
    <property type="interactions" value="11"/>
</dbReference>
<dbReference type="MINT" id="Q03919"/>
<dbReference type="STRING" id="4932.YDR139C"/>
<dbReference type="iPTMnet" id="Q03919"/>
<dbReference type="PaxDb" id="4932-YDR139C"/>
<dbReference type="PeptideAtlas" id="Q03919"/>
<dbReference type="EnsemblFungi" id="YDR139C_mRNA">
    <property type="protein sequence ID" value="YDR139C"/>
    <property type="gene ID" value="YDR139C"/>
</dbReference>
<dbReference type="GeneID" id="851717"/>
<dbReference type="KEGG" id="sce:YDR139C"/>
<dbReference type="AGR" id="SGD:S000002546"/>
<dbReference type="SGD" id="S000002546">
    <property type="gene designation" value="RUB1"/>
</dbReference>
<dbReference type="VEuPathDB" id="FungiDB:YDR139C"/>
<dbReference type="eggNOG" id="KOG0001">
    <property type="taxonomic scope" value="Eukaryota"/>
</dbReference>
<dbReference type="GeneTree" id="ENSGT00940000155856"/>
<dbReference type="HOGENOM" id="CLU_010412_6_4_1"/>
<dbReference type="InParanoid" id="Q03919"/>
<dbReference type="OMA" id="YAGKQMA"/>
<dbReference type="OrthoDB" id="428577at2759"/>
<dbReference type="BioCyc" id="YEAST:G3O-29736-MONOMER"/>
<dbReference type="Reactome" id="R-SCE-5689603">
    <property type="pathway name" value="UCH proteinases"/>
</dbReference>
<dbReference type="Reactome" id="R-SCE-8856825">
    <property type="pathway name" value="Cargo recognition for clathrin-mediated endocytosis"/>
</dbReference>
<dbReference type="Reactome" id="R-SCE-8951664">
    <property type="pathway name" value="Neddylation"/>
</dbReference>
<dbReference type="Reactome" id="R-SCE-917937">
    <property type="pathway name" value="Iron uptake and transport"/>
</dbReference>
<dbReference type="BioGRID-ORCS" id="851717">
    <property type="hits" value="0 hits in 10 CRISPR screens"/>
</dbReference>
<dbReference type="PRO" id="PR:Q03919"/>
<dbReference type="Proteomes" id="UP000002311">
    <property type="component" value="Chromosome IV"/>
</dbReference>
<dbReference type="RNAct" id="Q03919">
    <property type="molecule type" value="protein"/>
</dbReference>
<dbReference type="GO" id="GO:0005737">
    <property type="term" value="C:cytoplasm"/>
    <property type="evidence" value="ECO:0007005"/>
    <property type="project" value="SGD"/>
</dbReference>
<dbReference type="GO" id="GO:0005634">
    <property type="term" value="C:nucleus"/>
    <property type="evidence" value="ECO:0000318"/>
    <property type="project" value="GO_Central"/>
</dbReference>
<dbReference type="GO" id="GO:0031386">
    <property type="term" value="F:protein tag activity"/>
    <property type="evidence" value="ECO:0000314"/>
    <property type="project" value="SGD"/>
</dbReference>
<dbReference type="GO" id="GO:0031625">
    <property type="term" value="F:ubiquitin protein ligase binding"/>
    <property type="evidence" value="ECO:0000318"/>
    <property type="project" value="GO_Central"/>
</dbReference>
<dbReference type="GO" id="GO:0019941">
    <property type="term" value="P:modification-dependent protein catabolic process"/>
    <property type="evidence" value="ECO:0000318"/>
    <property type="project" value="GO_Central"/>
</dbReference>
<dbReference type="GO" id="GO:0045116">
    <property type="term" value="P:protein neddylation"/>
    <property type="evidence" value="ECO:0000314"/>
    <property type="project" value="SGD"/>
</dbReference>
<dbReference type="GO" id="GO:0030162">
    <property type="term" value="P:regulation of proteolysis"/>
    <property type="evidence" value="ECO:0000318"/>
    <property type="project" value="GO_Central"/>
</dbReference>
<dbReference type="CDD" id="cd01806">
    <property type="entry name" value="Ubl_NEDD8"/>
    <property type="match status" value="1"/>
</dbReference>
<dbReference type="FunFam" id="3.10.20.90:FF:000284">
    <property type="entry name" value="Ubiquitin family protein"/>
    <property type="match status" value="1"/>
</dbReference>
<dbReference type="Gene3D" id="3.10.20.90">
    <property type="entry name" value="Phosphatidylinositol 3-kinase Catalytic Subunit, Chain A, domain 1"/>
    <property type="match status" value="1"/>
</dbReference>
<dbReference type="InterPro" id="IPR038738">
    <property type="entry name" value="Nedd8-like"/>
</dbReference>
<dbReference type="InterPro" id="IPR000626">
    <property type="entry name" value="Ubiquitin-like_dom"/>
</dbReference>
<dbReference type="InterPro" id="IPR029071">
    <property type="entry name" value="Ubiquitin-like_domsf"/>
</dbReference>
<dbReference type="InterPro" id="IPR019954">
    <property type="entry name" value="Ubiquitin_CS"/>
</dbReference>
<dbReference type="InterPro" id="IPR019956">
    <property type="entry name" value="Ubiquitin_dom"/>
</dbReference>
<dbReference type="InterPro" id="IPR050158">
    <property type="entry name" value="Ubiquitin_ubiquitin-like"/>
</dbReference>
<dbReference type="PANTHER" id="PTHR10666">
    <property type="entry name" value="UBIQUITIN"/>
    <property type="match status" value="1"/>
</dbReference>
<dbReference type="Pfam" id="PF00240">
    <property type="entry name" value="ubiquitin"/>
    <property type="match status" value="1"/>
</dbReference>
<dbReference type="PRINTS" id="PR00348">
    <property type="entry name" value="UBIQUITIN"/>
</dbReference>
<dbReference type="SMART" id="SM00213">
    <property type="entry name" value="UBQ"/>
    <property type="match status" value="1"/>
</dbReference>
<dbReference type="SUPFAM" id="SSF54236">
    <property type="entry name" value="Ubiquitin-like"/>
    <property type="match status" value="1"/>
</dbReference>
<dbReference type="PROSITE" id="PS00299">
    <property type="entry name" value="UBIQUITIN_1"/>
    <property type="match status" value="1"/>
</dbReference>
<dbReference type="PROSITE" id="PS50053">
    <property type="entry name" value="UBIQUITIN_2"/>
    <property type="match status" value="1"/>
</dbReference>
<proteinExistence type="evidence at protein level"/>
<evidence type="ECO:0000255" key="1">
    <source>
        <dbReference type="PROSITE-ProRule" id="PRU00214"/>
    </source>
</evidence>
<evidence type="ECO:0000269" key="2">
    <source>
    </source>
</evidence>
<evidence type="ECO:0000269" key="3">
    <source>
    </source>
</evidence>
<evidence type="ECO:0000269" key="4">
    <source>
    </source>
</evidence>
<evidence type="ECO:0000269" key="5">
    <source>
    </source>
</evidence>
<evidence type="ECO:0000269" key="6">
    <source>
    </source>
</evidence>
<evidence type="ECO:0000305" key="7"/>
<sequence length="77" mass="8693">MIVKVKTLTGKEISVELKESDLVYHIKELLEEKEGIPPSQQRLIFQGKQIDDKLTVTDAHLVEGMQLHLVLTLRGGN</sequence>
<protein>
    <recommendedName>
        <fullName>NEDD8-like protein RUB1</fullName>
    </recommendedName>
    <alternativeName>
        <fullName>Related to ubiquitin protein 1</fullName>
    </alternativeName>
    <alternativeName>
        <fullName>Ubiquitin-like protein RUB1</fullName>
    </alternativeName>
</protein>
<reference key="1">
    <citation type="journal article" date="1998" name="EMBO J.">
        <title>A novel protein modification pathway related to the ubiquitin system.</title>
        <authorList>
            <person name="Liakopoulos D."/>
            <person name="Doenges G."/>
            <person name="Matuschewski K."/>
            <person name="Jentsch S."/>
        </authorList>
    </citation>
    <scope>NUCLEOTIDE SEQUENCE [GENOMIC DNA]</scope>
    <scope>FUNCTION</scope>
    <scope>INTERACTION WITH CDC53</scope>
    <scope>PROBABLE REMOVAL OF ASP-77</scope>
    <source>
        <strain>ATCC 200912 / DF5</strain>
    </source>
</reference>
<reference key="2">
    <citation type="journal article" date="1997" name="Nature">
        <title>The nucleotide sequence of Saccharomyces cerevisiae chromosome IV.</title>
        <authorList>
            <person name="Jacq C."/>
            <person name="Alt-Moerbe J."/>
            <person name="Andre B."/>
            <person name="Arnold W."/>
            <person name="Bahr A."/>
            <person name="Ballesta J.P.G."/>
            <person name="Bargues M."/>
            <person name="Baron L."/>
            <person name="Becker A."/>
            <person name="Biteau N."/>
            <person name="Bloecker H."/>
            <person name="Blugeon C."/>
            <person name="Boskovic J."/>
            <person name="Brandt P."/>
            <person name="Brueckner M."/>
            <person name="Buitrago M.J."/>
            <person name="Coster F."/>
            <person name="Delaveau T."/>
            <person name="del Rey F."/>
            <person name="Dujon B."/>
            <person name="Eide L.G."/>
            <person name="Garcia-Cantalejo J.M."/>
            <person name="Goffeau A."/>
            <person name="Gomez-Peris A."/>
            <person name="Granotier C."/>
            <person name="Hanemann V."/>
            <person name="Hankeln T."/>
            <person name="Hoheisel J.D."/>
            <person name="Jaeger W."/>
            <person name="Jimenez A."/>
            <person name="Jonniaux J.-L."/>
            <person name="Kraemer C."/>
            <person name="Kuester H."/>
            <person name="Laamanen P."/>
            <person name="Legros Y."/>
            <person name="Louis E.J."/>
            <person name="Moeller-Rieker S."/>
            <person name="Monnet A."/>
            <person name="Moro M."/>
            <person name="Mueller-Auer S."/>
            <person name="Nussbaumer B."/>
            <person name="Paricio N."/>
            <person name="Paulin L."/>
            <person name="Perea J."/>
            <person name="Perez-Alonso M."/>
            <person name="Perez-Ortin J.E."/>
            <person name="Pohl T.M."/>
            <person name="Prydz H."/>
            <person name="Purnelle B."/>
            <person name="Rasmussen S.W."/>
            <person name="Remacha M.A."/>
            <person name="Revuelta J.L."/>
            <person name="Rieger M."/>
            <person name="Salom D."/>
            <person name="Saluz H.P."/>
            <person name="Saiz J.E."/>
            <person name="Saren A.-M."/>
            <person name="Schaefer M."/>
            <person name="Scharfe M."/>
            <person name="Schmidt E.R."/>
            <person name="Schneider C."/>
            <person name="Scholler P."/>
            <person name="Schwarz S."/>
            <person name="Soler-Mira A."/>
            <person name="Urrestarazu L.A."/>
            <person name="Verhasselt P."/>
            <person name="Vissers S."/>
            <person name="Voet M."/>
            <person name="Volckaert G."/>
            <person name="Wagner G."/>
            <person name="Wambutt R."/>
            <person name="Wedler E."/>
            <person name="Wedler H."/>
            <person name="Woelfl S."/>
            <person name="Harris D.E."/>
            <person name="Bowman S."/>
            <person name="Brown D."/>
            <person name="Churcher C.M."/>
            <person name="Connor R."/>
            <person name="Dedman K."/>
            <person name="Gentles S."/>
            <person name="Hamlin N."/>
            <person name="Hunt S."/>
            <person name="Jones L."/>
            <person name="McDonald S."/>
            <person name="Murphy L.D."/>
            <person name="Niblett D."/>
            <person name="Odell C."/>
            <person name="Oliver K."/>
            <person name="Rajandream M.A."/>
            <person name="Richards C."/>
            <person name="Shore L."/>
            <person name="Walsh S.V."/>
            <person name="Barrell B.G."/>
            <person name="Dietrich F.S."/>
            <person name="Mulligan J.T."/>
            <person name="Allen E."/>
            <person name="Araujo R."/>
            <person name="Aviles E."/>
            <person name="Berno A."/>
            <person name="Carpenter J."/>
            <person name="Chen E."/>
            <person name="Cherry J.M."/>
            <person name="Chung E."/>
            <person name="Duncan M."/>
            <person name="Hunicke-Smith S."/>
            <person name="Hyman R.W."/>
            <person name="Komp C."/>
            <person name="Lashkari D."/>
            <person name="Lew H."/>
            <person name="Lin D."/>
            <person name="Mosedale D."/>
            <person name="Nakahara K."/>
            <person name="Namath A."/>
            <person name="Oefner P."/>
            <person name="Oh C."/>
            <person name="Petel F.X."/>
            <person name="Roberts D."/>
            <person name="Schramm S."/>
            <person name="Schroeder M."/>
            <person name="Shogren T."/>
            <person name="Shroff N."/>
            <person name="Winant A."/>
            <person name="Yelton M.A."/>
            <person name="Botstein D."/>
            <person name="Davis R.W."/>
            <person name="Johnston M."/>
            <person name="Andrews S."/>
            <person name="Brinkman R."/>
            <person name="Cooper J."/>
            <person name="Ding H."/>
            <person name="Du Z."/>
            <person name="Favello A."/>
            <person name="Fulton L."/>
            <person name="Gattung S."/>
            <person name="Greco T."/>
            <person name="Hallsworth K."/>
            <person name="Hawkins J."/>
            <person name="Hillier L.W."/>
            <person name="Jier M."/>
            <person name="Johnson D."/>
            <person name="Johnston L."/>
            <person name="Kirsten J."/>
            <person name="Kucaba T."/>
            <person name="Langston Y."/>
            <person name="Latreille P."/>
            <person name="Le T."/>
            <person name="Mardis E."/>
            <person name="Menezes S."/>
            <person name="Miller N."/>
            <person name="Nhan M."/>
            <person name="Pauley A."/>
            <person name="Peluso D."/>
            <person name="Rifkin L."/>
            <person name="Riles L."/>
            <person name="Taich A."/>
            <person name="Trevaskis E."/>
            <person name="Vignati D."/>
            <person name="Wilcox L."/>
            <person name="Wohldman P."/>
            <person name="Vaudin M."/>
            <person name="Wilson R."/>
            <person name="Waterston R."/>
            <person name="Albermann K."/>
            <person name="Hani J."/>
            <person name="Heumann K."/>
            <person name="Kleine K."/>
            <person name="Mewes H.-W."/>
            <person name="Zollner A."/>
            <person name="Zaccaria P."/>
        </authorList>
    </citation>
    <scope>NUCLEOTIDE SEQUENCE [LARGE SCALE GENOMIC DNA]</scope>
    <source>
        <strain>ATCC 204508 / S288c</strain>
    </source>
</reference>
<reference key="3">
    <citation type="journal article" date="2014" name="G3 (Bethesda)">
        <title>The reference genome sequence of Saccharomyces cerevisiae: Then and now.</title>
        <authorList>
            <person name="Engel S.R."/>
            <person name="Dietrich F.S."/>
            <person name="Fisk D.G."/>
            <person name="Binkley G."/>
            <person name="Balakrishnan R."/>
            <person name="Costanzo M.C."/>
            <person name="Dwight S.S."/>
            <person name="Hitz B.C."/>
            <person name="Karra K."/>
            <person name="Nash R.S."/>
            <person name="Weng S."/>
            <person name="Wong E.D."/>
            <person name="Lloyd P."/>
            <person name="Skrzypek M.S."/>
            <person name="Miyasato S.R."/>
            <person name="Simison M."/>
            <person name="Cherry J.M."/>
        </authorList>
    </citation>
    <scope>GENOME REANNOTATION</scope>
    <source>
        <strain>ATCC 204508 / S288c</strain>
    </source>
</reference>
<reference key="4">
    <citation type="journal article" date="1998" name="Genes Dev.">
        <title>Modification of yeast Cdc53p by the ubiquitin-related protein Rub1p affects function of the SCFCdc4 complex.</title>
        <authorList>
            <person name="Lammer D."/>
            <person name="Mathias N."/>
            <person name="Laplaza J.M."/>
            <person name="Jiang W."/>
            <person name="Liu Y."/>
            <person name="Callis J."/>
            <person name="Goebl M."/>
            <person name="Estelle M."/>
        </authorList>
    </citation>
    <scope>FUNCTION IN NEDDYLATION OF CDC53</scope>
</reference>
<reference key="5">
    <citation type="journal article" date="2003" name="Nature">
        <title>Global analysis of protein expression in yeast.</title>
        <authorList>
            <person name="Ghaemmaghami S."/>
            <person name="Huh W.-K."/>
            <person name="Bower K."/>
            <person name="Howson R.W."/>
            <person name="Belle A."/>
            <person name="Dephoure N."/>
            <person name="O'Shea E.K."/>
            <person name="Weissman J.S."/>
        </authorList>
    </citation>
    <scope>LEVEL OF PROTEIN EXPRESSION [LARGE SCALE ANALYSIS]</scope>
</reference>
<reference key="6">
    <citation type="journal article" date="2004" name="Biochem. J.">
        <title>Saccharomyces cerevisiae ubiquitin-like protein Rub1 conjugates to cullin proteins Rtt101 and Cul3 in vivo.</title>
        <authorList>
            <person name="Laplaza J.M."/>
            <person name="Bostick M."/>
            <person name="Scholes D.T."/>
            <person name="Curcio M.J."/>
            <person name="Callis J."/>
        </authorList>
    </citation>
    <scope>FUNCTION IN NEDDYLATION OF RTT101 AND CUL3</scope>
</reference>
<reference key="7">
    <citation type="journal article" date="2005" name="Nature">
        <title>The conserved protein DCN-1/Dcn1p is required for cullin neddylation in C. elegans and S. cerevisiae.</title>
        <authorList>
            <person name="Kurz T."/>
            <person name="Oezlue N."/>
            <person name="Rudolf F."/>
            <person name="O'Rourke S.M."/>
            <person name="Luke B."/>
            <person name="Hofmann K."/>
            <person name="Hyman A.A."/>
            <person name="Bowerman B."/>
            <person name="Peter M."/>
        </authorList>
    </citation>
    <scope>INTERACTION WITH DCN1</scope>
</reference>